<organism>
    <name type="scientific">Prochlorococcus marinus (strain NATL1A)</name>
    <dbReference type="NCBI Taxonomy" id="167555"/>
    <lineage>
        <taxon>Bacteria</taxon>
        <taxon>Bacillati</taxon>
        <taxon>Cyanobacteriota</taxon>
        <taxon>Cyanophyceae</taxon>
        <taxon>Synechococcales</taxon>
        <taxon>Prochlorococcaceae</taxon>
        <taxon>Prochlorococcus</taxon>
    </lineage>
</organism>
<proteinExistence type="inferred from homology"/>
<gene>
    <name evidence="1" type="primary">leuS</name>
    <name type="ordered locus">NATL1_09941</name>
</gene>
<evidence type="ECO:0000255" key="1">
    <source>
        <dbReference type="HAMAP-Rule" id="MF_00049"/>
    </source>
</evidence>
<name>SYL_PROM1</name>
<comment type="catalytic activity">
    <reaction evidence="1">
        <text>tRNA(Leu) + L-leucine + ATP = L-leucyl-tRNA(Leu) + AMP + diphosphate</text>
        <dbReference type="Rhea" id="RHEA:11688"/>
        <dbReference type="Rhea" id="RHEA-COMP:9613"/>
        <dbReference type="Rhea" id="RHEA-COMP:9622"/>
        <dbReference type="ChEBI" id="CHEBI:30616"/>
        <dbReference type="ChEBI" id="CHEBI:33019"/>
        <dbReference type="ChEBI" id="CHEBI:57427"/>
        <dbReference type="ChEBI" id="CHEBI:78442"/>
        <dbReference type="ChEBI" id="CHEBI:78494"/>
        <dbReference type="ChEBI" id="CHEBI:456215"/>
        <dbReference type="EC" id="6.1.1.4"/>
    </reaction>
</comment>
<comment type="subcellular location">
    <subcellularLocation>
        <location evidence="1">Cytoplasm</location>
    </subcellularLocation>
</comment>
<comment type="similarity">
    <text evidence="1">Belongs to the class-I aminoacyl-tRNA synthetase family.</text>
</comment>
<feature type="chain" id="PRO_0000334791" description="Leucine--tRNA ligase">
    <location>
        <begin position="1"/>
        <end position="862"/>
    </location>
</feature>
<feature type="short sequence motif" description="'HIGH' region">
    <location>
        <begin position="51"/>
        <end position="61"/>
    </location>
</feature>
<feature type="short sequence motif" description="'KMSKS' region">
    <location>
        <begin position="624"/>
        <end position="628"/>
    </location>
</feature>
<feature type="binding site" evidence="1">
    <location>
        <position position="627"/>
    </location>
    <ligand>
        <name>ATP</name>
        <dbReference type="ChEBI" id="CHEBI:30616"/>
    </ligand>
</feature>
<reference key="1">
    <citation type="journal article" date="2007" name="PLoS Genet.">
        <title>Patterns and implications of gene gain and loss in the evolution of Prochlorococcus.</title>
        <authorList>
            <person name="Kettler G.C."/>
            <person name="Martiny A.C."/>
            <person name="Huang K."/>
            <person name="Zucker J."/>
            <person name="Coleman M.L."/>
            <person name="Rodrigue S."/>
            <person name="Chen F."/>
            <person name="Lapidus A."/>
            <person name="Ferriera S."/>
            <person name="Johnson J."/>
            <person name="Steglich C."/>
            <person name="Church G.M."/>
            <person name="Richardson P."/>
            <person name="Chisholm S.W."/>
        </authorList>
    </citation>
    <scope>NUCLEOTIDE SEQUENCE [LARGE SCALE GENOMIC DNA]</scope>
    <source>
        <strain>NATL1A</strain>
    </source>
</reference>
<sequence>MNNTTSDINDQRYEPREVEAYWQKEWANDDLYRTNTEVNKENTFYALSMFPYPSGSLHMGHVRNYVITDVLARYKRMKGLNVLHPMGWDSFGLPAENAAIERETSPSTWTDKNISQMKDQLDRLGLSIDWSKEVTTCKEDYYKWTQYIFNQLHKNNLAYQKKATVNWDPIDQTVLANEQVDAEGKSWRSGAKVEKKELNQWFLRITSFAEDLNKDLVTLNDWPDRVRVMQKNWIGKSIGAEITFDIKNSDQKITAFTTRIDTVYGVSYLVLASNHPLIDQLISSNDIDKLNDFRQTQEKLSDLERNSDTRQKLGMYLGVDAINPANNKEIPIWIGDYVIMEYGTGAVMGVPAHDSRDYQFAKSYDLPIQYVIKPNIGEDESYLNAEFVDKGVMINSDKFNGIESDIAKTKILEFGSNSNWAKPKITYKLRDWLISRQRYWGCPIPIINCKKCGQVRVPDDDLPVVLPIDIKLTGKGKSPLTTKTEWINTCCPKCGTDAKRETDTMDTFMCSSWYFLRYINPDNCEKPFLKSEIDKWLPVKQYVGGIEHAILHLLYSRFLTKALKRCGLINIDEPFKKLLTQGMVQAVTFKNPNTNKYFSKDQIKDIDNPKDPLTGENIEIIYEKMSKSKYNGVDPSVVIDKYGADTARMFILFKAPPEKDLEWDDSDVEGQYRFIQRLWKFVINTFKLTNNNSRSNIEKEKSKDEEALRLINIAIKEITDDLDNLQFNTAISELMKVVNGLSLIVNYCSNETLNKVISILVKITSPFSPHIAEELWKTIGNTQSIHLQSWPEFDAGAIEQDTFKLMIQINGKVRGSINASKNLSKENLEDLAIKTEAAIKWMDGKEPKRIIVVPNKLVNIVI</sequence>
<protein>
    <recommendedName>
        <fullName evidence="1">Leucine--tRNA ligase</fullName>
        <ecNumber evidence="1">6.1.1.4</ecNumber>
    </recommendedName>
    <alternativeName>
        <fullName evidence="1">Leucyl-tRNA synthetase</fullName>
        <shortName evidence="1">LeuRS</shortName>
    </alternativeName>
</protein>
<accession>A2C242</accession>
<keyword id="KW-0030">Aminoacyl-tRNA synthetase</keyword>
<keyword id="KW-0067">ATP-binding</keyword>
<keyword id="KW-0963">Cytoplasm</keyword>
<keyword id="KW-0436">Ligase</keyword>
<keyword id="KW-0547">Nucleotide-binding</keyword>
<keyword id="KW-0648">Protein biosynthesis</keyword>
<dbReference type="EC" id="6.1.1.4" evidence="1"/>
<dbReference type="EMBL" id="CP000553">
    <property type="protein sequence ID" value="ABM75552.1"/>
    <property type="molecule type" value="Genomic_DNA"/>
</dbReference>
<dbReference type="RefSeq" id="WP_011823678.1">
    <property type="nucleotide sequence ID" value="NC_008819.1"/>
</dbReference>
<dbReference type="SMR" id="A2C242"/>
<dbReference type="KEGG" id="pme:NATL1_09941"/>
<dbReference type="eggNOG" id="COG0495">
    <property type="taxonomic scope" value="Bacteria"/>
</dbReference>
<dbReference type="HOGENOM" id="CLU_004427_0_0_3"/>
<dbReference type="Proteomes" id="UP000002592">
    <property type="component" value="Chromosome"/>
</dbReference>
<dbReference type="GO" id="GO:0005829">
    <property type="term" value="C:cytosol"/>
    <property type="evidence" value="ECO:0007669"/>
    <property type="project" value="TreeGrafter"/>
</dbReference>
<dbReference type="GO" id="GO:0002161">
    <property type="term" value="F:aminoacyl-tRNA deacylase activity"/>
    <property type="evidence" value="ECO:0007669"/>
    <property type="project" value="InterPro"/>
</dbReference>
<dbReference type="GO" id="GO:0005524">
    <property type="term" value="F:ATP binding"/>
    <property type="evidence" value="ECO:0007669"/>
    <property type="project" value="UniProtKB-UniRule"/>
</dbReference>
<dbReference type="GO" id="GO:0004823">
    <property type="term" value="F:leucine-tRNA ligase activity"/>
    <property type="evidence" value="ECO:0007669"/>
    <property type="project" value="UniProtKB-UniRule"/>
</dbReference>
<dbReference type="GO" id="GO:0006429">
    <property type="term" value="P:leucyl-tRNA aminoacylation"/>
    <property type="evidence" value="ECO:0007669"/>
    <property type="project" value="UniProtKB-UniRule"/>
</dbReference>
<dbReference type="CDD" id="cd07958">
    <property type="entry name" value="Anticodon_Ia_Leu_BEm"/>
    <property type="match status" value="1"/>
</dbReference>
<dbReference type="CDD" id="cd00812">
    <property type="entry name" value="LeuRS_core"/>
    <property type="match status" value="1"/>
</dbReference>
<dbReference type="FunFam" id="3.40.50.620:FF:000003">
    <property type="entry name" value="Leucine--tRNA ligase"/>
    <property type="match status" value="1"/>
</dbReference>
<dbReference type="FunFam" id="1.10.730.10:FF:000011">
    <property type="entry name" value="Leucine--tRNA ligase chloroplastic/mitochondrial"/>
    <property type="match status" value="1"/>
</dbReference>
<dbReference type="FunFam" id="3.40.50.620:FF:000100">
    <property type="entry name" value="probable leucine--tRNA ligase, mitochondrial"/>
    <property type="match status" value="1"/>
</dbReference>
<dbReference type="Gene3D" id="3.40.50.620">
    <property type="entry name" value="HUPs"/>
    <property type="match status" value="2"/>
</dbReference>
<dbReference type="Gene3D" id="1.10.730.10">
    <property type="entry name" value="Isoleucyl-tRNA Synthetase, Domain 1"/>
    <property type="match status" value="1"/>
</dbReference>
<dbReference type="HAMAP" id="MF_00049_B">
    <property type="entry name" value="Leu_tRNA_synth_B"/>
    <property type="match status" value="1"/>
</dbReference>
<dbReference type="InterPro" id="IPR001412">
    <property type="entry name" value="aa-tRNA-synth_I_CS"/>
</dbReference>
<dbReference type="InterPro" id="IPR002300">
    <property type="entry name" value="aa-tRNA-synth_Ia"/>
</dbReference>
<dbReference type="InterPro" id="IPR002302">
    <property type="entry name" value="Leu-tRNA-ligase"/>
</dbReference>
<dbReference type="InterPro" id="IPR025709">
    <property type="entry name" value="Leu_tRNA-synth_edit"/>
</dbReference>
<dbReference type="InterPro" id="IPR013155">
    <property type="entry name" value="M/V/L/I-tRNA-synth_anticd-bd"/>
</dbReference>
<dbReference type="InterPro" id="IPR015413">
    <property type="entry name" value="Methionyl/Leucyl_tRNA_Synth"/>
</dbReference>
<dbReference type="InterPro" id="IPR014729">
    <property type="entry name" value="Rossmann-like_a/b/a_fold"/>
</dbReference>
<dbReference type="InterPro" id="IPR009080">
    <property type="entry name" value="tRNAsynth_Ia_anticodon-bd"/>
</dbReference>
<dbReference type="InterPro" id="IPR009008">
    <property type="entry name" value="Val/Leu/Ile-tRNA-synth_edit"/>
</dbReference>
<dbReference type="NCBIfam" id="TIGR00396">
    <property type="entry name" value="leuS_bact"/>
    <property type="match status" value="1"/>
</dbReference>
<dbReference type="PANTHER" id="PTHR43740:SF2">
    <property type="entry name" value="LEUCINE--TRNA LIGASE, MITOCHONDRIAL"/>
    <property type="match status" value="1"/>
</dbReference>
<dbReference type="PANTHER" id="PTHR43740">
    <property type="entry name" value="LEUCYL-TRNA SYNTHETASE"/>
    <property type="match status" value="1"/>
</dbReference>
<dbReference type="Pfam" id="PF08264">
    <property type="entry name" value="Anticodon_1"/>
    <property type="match status" value="1"/>
</dbReference>
<dbReference type="Pfam" id="PF00133">
    <property type="entry name" value="tRNA-synt_1"/>
    <property type="match status" value="2"/>
</dbReference>
<dbReference type="Pfam" id="PF13603">
    <property type="entry name" value="tRNA-synt_1_2"/>
    <property type="match status" value="1"/>
</dbReference>
<dbReference type="Pfam" id="PF09334">
    <property type="entry name" value="tRNA-synt_1g"/>
    <property type="match status" value="1"/>
</dbReference>
<dbReference type="PRINTS" id="PR00985">
    <property type="entry name" value="TRNASYNTHLEU"/>
</dbReference>
<dbReference type="SUPFAM" id="SSF47323">
    <property type="entry name" value="Anticodon-binding domain of a subclass of class I aminoacyl-tRNA synthetases"/>
    <property type="match status" value="1"/>
</dbReference>
<dbReference type="SUPFAM" id="SSF52374">
    <property type="entry name" value="Nucleotidylyl transferase"/>
    <property type="match status" value="1"/>
</dbReference>
<dbReference type="SUPFAM" id="SSF50677">
    <property type="entry name" value="ValRS/IleRS/LeuRS editing domain"/>
    <property type="match status" value="1"/>
</dbReference>
<dbReference type="PROSITE" id="PS00178">
    <property type="entry name" value="AA_TRNA_LIGASE_I"/>
    <property type="match status" value="1"/>
</dbReference>